<evidence type="ECO:0000255" key="1">
    <source>
        <dbReference type="HAMAP-Rule" id="MF_00378"/>
    </source>
</evidence>
<accession>Q03FZ4</accession>
<name>EX7L_PEDPA</name>
<feature type="chain" id="PRO_1000122075" description="Exodeoxyribonuclease 7 large subunit">
    <location>
        <begin position="1"/>
        <end position="447"/>
    </location>
</feature>
<proteinExistence type="inferred from homology"/>
<dbReference type="EC" id="3.1.11.6" evidence="1"/>
<dbReference type="EMBL" id="CP000422">
    <property type="protein sequence ID" value="ABJ67878.1"/>
    <property type="molecule type" value="Genomic_DNA"/>
</dbReference>
<dbReference type="RefSeq" id="WP_002833546.1">
    <property type="nucleotide sequence ID" value="NC_008525.1"/>
</dbReference>
<dbReference type="SMR" id="Q03FZ4"/>
<dbReference type="STRING" id="278197.PEPE_0818"/>
<dbReference type="GeneID" id="33061939"/>
<dbReference type="KEGG" id="ppe:PEPE_0818"/>
<dbReference type="eggNOG" id="COG1570">
    <property type="taxonomic scope" value="Bacteria"/>
</dbReference>
<dbReference type="HOGENOM" id="CLU_023625_3_1_9"/>
<dbReference type="OrthoDB" id="9802795at2"/>
<dbReference type="Proteomes" id="UP000000773">
    <property type="component" value="Chromosome"/>
</dbReference>
<dbReference type="GO" id="GO:0005737">
    <property type="term" value="C:cytoplasm"/>
    <property type="evidence" value="ECO:0007669"/>
    <property type="project" value="UniProtKB-SubCell"/>
</dbReference>
<dbReference type="GO" id="GO:0009318">
    <property type="term" value="C:exodeoxyribonuclease VII complex"/>
    <property type="evidence" value="ECO:0007669"/>
    <property type="project" value="InterPro"/>
</dbReference>
<dbReference type="GO" id="GO:0008855">
    <property type="term" value="F:exodeoxyribonuclease VII activity"/>
    <property type="evidence" value="ECO:0007669"/>
    <property type="project" value="UniProtKB-UniRule"/>
</dbReference>
<dbReference type="GO" id="GO:0003676">
    <property type="term" value="F:nucleic acid binding"/>
    <property type="evidence" value="ECO:0007669"/>
    <property type="project" value="InterPro"/>
</dbReference>
<dbReference type="GO" id="GO:0006308">
    <property type="term" value="P:DNA catabolic process"/>
    <property type="evidence" value="ECO:0007669"/>
    <property type="project" value="UniProtKB-UniRule"/>
</dbReference>
<dbReference type="CDD" id="cd04489">
    <property type="entry name" value="ExoVII_LU_OBF"/>
    <property type="match status" value="1"/>
</dbReference>
<dbReference type="HAMAP" id="MF_00378">
    <property type="entry name" value="Exonuc_7_L"/>
    <property type="match status" value="1"/>
</dbReference>
<dbReference type="InterPro" id="IPR003753">
    <property type="entry name" value="Exonuc_VII_L"/>
</dbReference>
<dbReference type="InterPro" id="IPR020579">
    <property type="entry name" value="Exonuc_VII_lsu_C"/>
</dbReference>
<dbReference type="InterPro" id="IPR025824">
    <property type="entry name" value="OB-fold_nuc-bd_dom"/>
</dbReference>
<dbReference type="NCBIfam" id="TIGR00237">
    <property type="entry name" value="xseA"/>
    <property type="match status" value="1"/>
</dbReference>
<dbReference type="PANTHER" id="PTHR30008">
    <property type="entry name" value="EXODEOXYRIBONUCLEASE 7 LARGE SUBUNIT"/>
    <property type="match status" value="1"/>
</dbReference>
<dbReference type="PANTHER" id="PTHR30008:SF0">
    <property type="entry name" value="EXODEOXYRIBONUCLEASE 7 LARGE SUBUNIT"/>
    <property type="match status" value="1"/>
</dbReference>
<dbReference type="Pfam" id="PF02601">
    <property type="entry name" value="Exonuc_VII_L"/>
    <property type="match status" value="1"/>
</dbReference>
<dbReference type="Pfam" id="PF13742">
    <property type="entry name" value="tRNA_anti_2"/>
    <property type="match status" value="1"/>
</dbReference>
<keyword id="KW-0963">Cytoplasm</keyword>
<keyword id="KW-0269">Exonuclease</keyword>
<keyword id="KW-0378">Hydrolase</keyword>
<keyword id="KW-0540">Nuclease</keyword>
<reference key="1">
    <citation type="journal article" date="2006" name="Proc. Natl. Acad. Sci. U.S.A.">
        <title>Comparative genomics of the lactic acid bacteria.</title>
        <authorList>
            <person name="Makarova K.S."/>
            <person name="Slesarev A."/>
            <person name="Wolf Y.I."/>
            <person name="Sorokin A."/>
            <person name="Mirkin B."/>
            <person name="Koonin E.V."/>
            <person name="Pavlov A."/>
            <person name="Pavlova N."/>
            <person name="Karamychev V."/>
            <person name="Polouchine N."/>
            <person name="Shakhova V."/>
            <person name="Grigoriev I."/>
            <person name="Lou Y."/>
            <person name="Rohksar D."/>
            <person name="Lucas S."/>
            <person name="Huang K."/>
            <person name="Goodstein D.M."/>
            <person name="Hawkins T."/>
            <person name="Plengvidhya V."/>
            <person name="Welker D."/>
            <person name="Hughes J."/>
            <person name="Goh Y."/>
            <person name="Benson A."/>
            <person name="Baldwin K."/>
            <person name="Lee J.-H."/>
            <person name="Diaz-Muniz I."/>
            <person name="Dosti B."/>
            <person name="Smeianov V."/>
            <person name="Wechter W."/>
            <person name="Barabote R."/>
            <person name="Lorca G."/>
            <person name="Altermann E."/>
            <person name="Barrangou R."/>
            <person name="Ganesan B."/>
            <person name="Xie Y."/>
            <person name="Rawsthorne H."/>
            <person name="Tamir D."/>
            <person name="Parker C."/>
            <person name="Breidt F."/>
            <person name="Broadbent J.R."/>
            <person name="Hutkins R."/>
            <person name="O'Sullivan D."/>
            <person name="Steele J."/>
            <person name="Unlu G."/>
            <person name="Saier M.H. Jr."/>
            <person name="Klaenhammer T."/>
            <person name="Richardson P."/>
            <person name="Kozyavkin S."/>
            <person name="Weimer B.C."/>
            <person name="Mills D.A."/>
        </authorList>
    </citation>
    <scope>NUCLEOTIDE SEQUENCE [LARGE SCALE GENOMIC DNA]</scope>
    <source>
        <strain>ATCC 25745 / CCUG 21536 / LMG 10740 / 183-1w</strain>
    </source>
</reference>
<comment type="function">
    <text evidence="1">Bidirectionally degrades single-stranded DNA into large acid-insoluble oligonucleotides, which are then degraded further into small acid-soluble oligonucleotides.</text>
</comment>
<comment type="catalytic activity">
    <reaction evidence="1">
        <text>Exonucleolytic cleavage in either 5'- to 3'- or 3'- to 5'-direction to yield nucleoside 5'-phosphates.</text>
        <dbReference type="EC" id="3.1.11.6"/>
    </reaction>
</comment>
<comment type="subunit">
    <text evidence="1">Heterooligomer composed of large and small subunits.</text>
</comment>
<comment type="subcellular location">
    <subcellularLocation>
        <location evidence="1">Cytoplasm</location>
    </subcellularLocation>
</comment>
<comment type="similarity">
    <text evidence="1">Belongs to the XseA family.</text>
</comment>
<gene>
    <name evidence="1" type="primary">xseA</name>
    <name type="ordered locus">PEPE_0818</name>
</gene>
<organism>
    <name type="scientific">Pediococcus pentosaceus (strain ATCC 25745 / CCUG 21536 / LMG 10740 / 183-1w)</name>
    <dbReference type="NCBI Taxonomy" id="278197"/>
    <lineage>
        <taxon>Bacteria</taxon>
        <taxon>Bacillati</taxon>
        <taxon>Bacillota</taxon>
        <taxon>Bacilli</taxon>
        <taxon>Lactobacillales</taxon>
        <taxon>Lactobacillaceae</taxon>
        <taxon>Pediococcus</taxon>
    </lineage>
</organism>
<sequence length="447" mass="50114">MQEDKYLTVSALTNYIKRKFDADPYLHRVYLVGEISNFRLRTNSHQYFSLKDENAKISAIMFKSAFAKVKFQPEEGMRVIVSGRISLYPGNGSYQIYVDSMQPDGVGALYQAYEQLKIKLSQEGLFEAPKLPIPKYPRKIAIVTSPSGAVIRDIITTVSRRYPIVQLVLFPALVQGNEAANSIAAQIKMINTLDDFDTIIIGRGGGSIEDLWPFNEEVVARAIFASKLPVISSVGHETDTTIADLVADMRAATPTAAAELATPVLTDILEELQKLQLQTIVAFRNILKMRSQQVQHLQQSYIFQEPQRLYEGYVQNVDILTEKLISLEKQQITTAEGSFKTLNSRLLANTPASRIKMAKQNVEHLRQMTNNNITNRFSKYANDLNSLIGSLDTLSPLKIMSRGYTYVTRDTKVVKSIEDLSIDDKIQLNFSDGSANAVIKTINSEDK</sequence>
<protein>
    <recommendedName>
        <fullName evidence="1">Exodeoxyribonuclease 7 large subunit</fullName>
        <ecNumber evidence="1">3.1.11.6</ecNumber>
    </recommendedName>
    <alternativeName>
        <fullName evidence="1">Exodeoxyribonuclease VII large subunit</fullName>
        <shortName evidence="1">Exonuclease VII large subunit</shortName>
    </alternativeName>
</protein>